<gene>
    <name evidence="1" type="primary">hisF</name>
    <name type="ordered locus">ACP_2336</name>
</gene>
<comment type="function">
    <text evidence="1">IGPS catalyzes the conversion of PRFAR and glutamine to IGP, AICAR and glutamate. The HisF subunit catalyzes the cyclization activity that produces IGP and AICAR from PRFAR using the ammonia provided by the HisH subunit.</text>
</comment>
<comment type="catalytic activity">
    <reaction evidence="1">
        <text>5-[(5-phospho-1-deoxy-D-ribulos-1-ylimino)methylamino]-1-(5-phospho-beta-D-ribosyl)imidazole-4-carboxamide + L-glutamine = D-erythro-1-(imidazol-4-yl)glycerol 3-phosphate + 5-amino-1-(5-phospho-beta-D-ribosyl)imidazole-4-carboxamide + L-glutamate + H(+)</text>
        <dbReference type="Rhea" id="RHEA:24793"/>
        <dbReference type="ChEBI" id="CHEBI:15378"/>
        <dbReference type="ChEBI" id="CHEBI:29985"/>
        <dbReference type="ChEBI" id="CHEBI:58278"/>
        <dbReference type="ChEBI" id="CHEBI:58359"/>
        <dbReference type="ChEBI" id="CHEBI:58475"/>
        <dbReference type="ChEBI" id="CHEBI:58525"/>
        <dbReference type="EC" id="4.3.2.10"/>
    </reaction>
</comment>
<comment type="pathway">
    <text evidence="1">Amino-acid biosynthesis; L-histidine biosynthesis; L-histidine from 5-phospho-alpha-D-ribose 1-diphosphate: step 5/9.</text>
</comment>
<comment type="subunit">
    <text evidence="1">Heterodimer of HisH and HisF.</text>
</comment>
<comment type="subcellular location">
    <subcellularLocation>
        <location evidence="1">Cytoplasm</location>
    </subcellularLocation>
</comment>
<comment type="similarity">
    <text evidence="1">Belongs to the HisA/HisF family.</text>
</comment>
<feature type="chain" id="PRO_1000148899" description="Imidazole glycerol phosphate synthase subunit HisF">
    <location>
        <begin position="1"/>
        <end position="253"/>
    </location>
</feature>
<feature type="active site" evidence="1">
    <location>
        <position position="11"/>
    </location>
</feature>
<feature type="active site" evidence="1">
    <location>
        <position position="130"/>
    </location>
</feature>
<sequence>MLTRRIIACLDVTNGRVVKGVQFLDLMDAGDPAELAARHAASGADEIVLLDITATHEGRGTLLETVRKTAQRLFIPFTVGGGIRTADDAAAVFDAGADKISINSAALTRPELIEEIGSKFGAQAVVVAIDARRNATGAEVFASGGRKPTGRDAVAWAREAEQRGAGEILLTSMDADGTRDGFDCELTAAVSSAVQIPVIASGGAGTPQHFADVFLRGKADAALAASIFHFGVADARSLKAELAAQSIPMRLPC</sequence>
<evidence type="ECO:0000255" key="1">
    <source>
        <dbReference type="HAMAP-Rule" id="MF_01013"/>
    </source>
</evidence>
<dbReference type="EC" id="4.3.2.10" evidence="1"/>
<dbReference type="EMBL" id="CP001472">
    <property type="protein sequence ID" value="ACO31996.1"/>
    <property type="molecule type" value="Genomic_DNA"/>
</dbReference>
<dbReference type="RefSeq" id="WP_015897426.1">
    <property type="nucleotide sequence ID" value="NC_012483.1"/>
</dbReference>
<dbReference type="SMR" id="C1FAD8"/>
<dbReference type="FunCoup" id="C1FAD8">
    <property type="interactions" value="554"/>
</dbReference>
<dbReference type="STRING" id="240015.ACP_2336"/>
<dbReference type="KEGG" id="aca:ACP_2336"/>
<dbReference type="eggNOG" id="COG0107">
    <property type="taxonomic scope" value="Bacteria"/>
</dbReference>
<dbReference type="HOGENOM" id="CLU_048577_4_0_0"/>
<dbReference type="InParanoid" id="C1FAD8"/>
<dbReference type="OrthoDB" id="9781903at2"/>
<dbReference type="UniPathway" id="UPA00031">
    <property type="reaction ID" value="UER00010"/>
</dbReference>
<dbReference type="Proteomes" id="UP000002207">
    <property type="component" value="Chromosome"/>
</dbReference>
<dbReference type="GO" id="GO:0005737">
    <property type="term" value="C:cytoplasm"/>
    <property type="evidence" value="ECO:0007669"/>
    <property type="project" value="UniProtKB-SubCell"/>
</dbReference>
<dbReference type="GO" id="GO:0000107">
    <property type="term" value="F:imidazoleglycerol-phosphate synthase activity"/>
    <property type="evidence" value="ECO:0007669"/>
    <property type="project" value="UniProtKB-UniRule"/>
</dbReference>
<dbReference type="GO" id="GO:0016829">
    <property type="term" value="F:lyase activity"/>
    <property type="evidence" value="ECO:0007669"/>
    <property type="project" value="UniProtKB-KW"/>
</dbReference>
<dbReference type="GO" id="GO:0000105">
    <property type="term" value="P:L-histidine biosynthetic process"/>
    <property type="evidence" value="ECO:0007669"/>
    <property type="project" value="UniProtKB-UniRule"/>
</dbReference>
<dbReference type="CDD" id="cd04731">
    <property type="entry name" value="HisF"/>
    <property type="match status" value="1"/>
</dbReference>
<dbReference type="FunFam" id="3.20.20.70:FF:000006">
    <property type="entry name" value="Imidazole glycerol phosphate synthase subunit HisF"/>
    <property type="match status" value="1"/>
</dbReference>
<dbReference type="Gene3D" id="3.20.20.70">
    <property type="entry name" value="Aldolase class I"/>
    <property type="match status" value="1"/>
</dbReference>
<dbReference type="HAMAP" id="MF_01013">
    <property type="entry name" value="HisF"/>
    <property type="match status" value="1"/>
</dbReference>
<dbReference type="InterPro" id="IPR013785">
    <property type="entry name" value="Aldolase_TIM"/>
</dbReference>
<dbReference type="InterPro" id="IPR006062">
    <property type="entry name" value="His_biosynth"/>
</dbReference>
<dbReference type="InterPro" id="IPR004651">
    <property type="entry name" value="HisF"/>
</dbReference>
<dbReference type="InterPro" id="IPR050064">
    <property type="entry name" value="IGPS_HisA/HisF"/>
</dbReference>
<dbReference type="InterPro" id="IPR011060">
    <property type="entry name" value="RibuloseP-bd_barrel"/>
</dbReference>
<dbReference type="NCBIfam" id="TIGR00735">
    <property type="entry name" value="hisF"/>
    <property type="match status" value="1"/>
</dbReference>
<dbReference type="PANTHER" id="PTHR21235:SF2">
    <property type="entry name" value="IMIDAZOLE GLYCEROL PHOSPHATE SYNTHASE HISHF"/>
    <property type="match status" value="1"/>
</dbReference>
<dbReference type="PANTHER" id="PTHR21235">
    <property type="entry name" value="IMIDAZOLE GLYCEROL PHOSPHATE SYNTHASE SUBUNIT HISF/H IGP SYNTHASE SUBUNIT HISF/H"/>
    <property type="match status" value="1"/>
</dbReference>
<dbReference type="Pfam" id="PF00977">
    <property type="entry name" value="His_biosynth"/>
    <property type="match status" value="1"/>
</dbReference>
<dbReference type="SUPFAM" id="SSF51366">
    <property type="entry name" value="Ribulose-phoshate binding barrel"/>
    <property type="match status" value="1"/>
</dbReference>
<organism>
    <name type="scientific">Acidobacterium capsulatum (strain ATCC 51196 / DSM 11244 / BCRC 80197 / JCM 7670 / NBRC 15755 / NCIMB 13165 / 161)</name>
    <dbReference type="NCBI Taxonomy" id="240015"/>
    <lineage>
        <taxon>Bacteria</taxon>
        <taxon>Pseudomonadati</taxon>
        <taxon>Acidobacteriota</taxon>
        <taxon>Terriglobia</taxon>
        <taxon>Terriglobales</taxon>
        <taxon>Acidobacteriaceae</taxon>
        <taxon>Acidobacterium</taxon>
    </lineage>
</organism>
<protein>
    <recommendedName>
        <fullName evidence="1">Imidazole glycerol phosphate synthase subunit HisF</fullName>
        <ecNumber evidence="1">4.3.2.10</ecNumber>
    </recommendedName>
    <alternativeName>
        <fullName evidence="1">IGP synthase cyclase subunit</fullName>
    </alternativeName>
    <alternativeName>
        <fullName evidence="1">IGP synthase subunit HisF</fullName>
    </alternativeName>
    <alternativeName>
        <fullName evidence="1">ImGP synthase subunit HisF</fullName>
        <shortName evidence="1">IGPS subunit HisF</shortName>
    </alternativeName>
</protein>
<accession>C1FAD8</accession>
<proteinExistence type="inferred from homology"/>
<reference key="1">
    <citation type="journal article" date="2009" name="Appl. Environ. Microbiol.">
        <title>Three genomes from the phylum Acidobacteria provide insight into the lifestyles of these microorganisms in soils.</title>
        <authorList>
            <person name="Ward N.L."/>
            <person name="Challacombe J.F."/>
            <person name="Janssen P.H."/>
            <person name="Henrissat B."/>
            <person name="Coutinho P.M."/>
            <person name="Wu M."/>
            <person name="Xie G."/>
            <person name="Haft D.H."/>
            <person name="Sait M."/>
            <person name="Badger J."/>
            <person name="Barabote R.D."/>
            <person name="Bradley B."/>
            <person name="Brettin T.S."/>
            <person name="Brinkac L.M."/>
            <person name="Bruce D."/>
            <person name="Creasy T."/>
            <person name="Daugherty S.C."/>
            <person name="Davidsen T.M."/>
            <person name="DeBoy R.T."/>
            <person name="Detter J.C."/>
            <person name="Dodson R.J."/>
            <person name="Durkin A.S."/>
            <person name="Ganapathy A."/>
            <person name="Gwinn-Giglio M."/>
            <person name="Han C.S."/>
            <person name="Khouri H."/>
            <person name="Kiss H."/>
            <person name="Kothari S.P."/>
            <person name="Madupu R."/>
            <person name="Nelson K.E."/>
            <person name="Nelson W.C."/>
            <person name="Paulsen I."/>
            <person name="Penn K."/>
            <person name="Ren Q."/>
            <person name="Rosovitz M.J."/>
            <person name="Selengut J.D."/>
            <person name="Shrivastava S."/>
            <person name="Sullivan S.A."/>
            <person name="Tapia R."/>
            <person name="Thompson L.S."/>
            <person name="Watkins K.L."/>
            <person name="Yang Q."/>
            <person name="Yu C."/>
            <person name="Zafar N."/>
            <person name="Zhou L."/>
            <person name="Kuske C.R."/>
        </authorList>
    </citation>
    <scope>NUCLEOTIDE SEQUENCE [LARGE SCALE GENOMIC DNA]</scope>
    <source>
        <strain>ATCC 51196 / DSM 11244 / BCRC 80197 / JCM 7670 / NBRC 15755 / NCIMB 13165 / 161</strain>
    </source>
</reference>
<keyword id="KW-0028">Amino-acid biosynthesis</keyword>
<keyword id="KW-0963">Cytoplasm</keyword>
<keyword id="KW-0368">Histidine biosynthesis</keyword>
<keyword id="KW-0456">Lyase</keyword>
<keyword id="KW-1185">Reference proteome</keyword>
<name>HIS6_ACIC5</name>